<evidence type="ECO:0000255" key="1">
    <source>
        <dbReference type="HAMAP-Rule" id="MF_00605"/>
    </source>
</evidence>
<sequence>MQIDVLSLFPNMFEPLRESMIGKAIERELLNFDVVDYRSYSHDKHHHVDDTPYGGGAGMLLKPEPLFEAMDGVNERHPGPKRVILMDPAGKKFNHQAARALSQEDHLVFICGHYEGYDERIRTLVTDEYSLGDYVLTGGELPAMVMIDAIVRLLPGVLGNDESAHTDSFENGLLEYPQYTRPPEYRGMKVPEVLQNGNHQLIARWRQKESLRRTYLRRPDLLKTITLDQTAQKLLREVKTEEATKAAEARLKNQS</sequence>
<keyword id="KW-0963">Cytoplasm</keyword>
<keyword id="KW-0489">Methyltransferase</keyword>
<keyword id="KW-1185">Reference proteome</keyword>
<keyword id="KW-0949">S-adenosyl-L-methionine</keyword>
<keyword id="KW-0808">Transferase</keyword>
<keyword id="KW-0819">tRNA processing</keyword>
<name>TRMD_LACP3</name>
<protein>
    <recommendedName>
        <fullName evidence="1">tRNA (guanine-N(1)-)-methyltransferase</fullName>
        <ecNumber evidence="1">2.1.1.228</ecNumber>
    </recommendedName>
    <alternativeName>
        <fullName evidence="1">M1G-methyltransferase</fullName>
    </alternativeName>
    <alternativeName>
        <fullName evidence="1">tRNA [GM37] methyltransferase</fullName>
    </alternativeName>
</protein>
<gene>
    <name evidence="1" type="primary">trmD</name>
    <name type="ordered locus">LSEI_1598</name>
</gene>
<accession>Q038K0</accession>
<dbReference type="EC" id="2.1.1.228" evidence="1"/>
<dbReference type="EMBL" id="CP000423">
    <property type="protein sequence ID" value="ABJ70372.1"/>
    <property type="molecule type" value="Genomic_DNA"/>
</dbReference>
<dbReference type="RefSeq" id="WP_003660738.1">
    <property type="nucleotide sequence ID" value="NC_008526.1"/>
</dbReference>
<dbReference type="RefSeq" id="YP_806814.1">
    <property type="nucleotide sequence ID" value="NC_008526.1"/>
</dbReference>
<dbReference type="SMR" id="Q038K0"/>
<dbReference type="STRING" id="321967.LSEI_1598"/>
<dbReference type="PaxDb" id="321967-LSEI_1598"/>
<dbReference type="KEGG" id="lca:LSEI_1598"/>
<dbReference type="PATRIC" id="fig|321967.11.peg.1579"/>
<dbReference type="HOGENOM" id="CLU_047363_0_1_9"/>
<dbReference type="Proteomes" id="UP000001651">
    <property type="component" value="Chromosome"/>
</dbReference>
<dbReference type="GO" id="GO:0005829">
    <property type="term" value="C:cytosol"/>
    <property type="evidence" value="ECO:0007669"/>
    <property type="project" value="TreeGrafter"/>
</dbReference>
<dbReference type="GO" id="GO:0052906">
    <property type="term" value="F:tRNA (guanine(37)-N1)-methyltransferase activity"/>
    <property type="evidence" value="ECO:0007669"/>
    <property type="project" value="UniProtKB-UniRule"/>
</dbReference>
<dbReference type="GO" id="GO:0002939">
    <property type="term" value="P:tRNA N1-guanine methylation"/>
    <property type="evidence" value="ECO:0007669"/>
    <property type="project" value="TreeGrafter"/>
</dbReference>
<dbReference type="CDD" id="cd18080">
    <property type="entry name" value="TrmD-like"/>
    <property type="match status" value="1"/>
</dbReference>
<dbReference type="FunFam" id="1.10.1270.20:FF:000001">
    <property type="entry name" value="tRNA (guanine-N(1)-)-methyltransferase"/>
    <property type="match status" value="1"/>
</dbReference>
<dbReference type="FunFam" id="3.40.1280.10:FF:000001">
    <property type="entry name" value="tRNA (guanine-N(1)-)-methyltransferase"/>
    <property type="match status" value="1"/>
</dbReference>
<dbReference type="Gene3D" id="3.40.1280.10">
    <property type="match status" value="1"/>
</dbReference>
<dbReference type="Gene3D" id="1.10.1270.20">
    <property type="entry name" value="tRNA(m1g37)methyltransferase, domain 2"/>
    <property type="match status" value="1"/>
</dbReference>
<dbReference type="HAMAP" id="MF_00605">
    <property type="entry name" value="TrmD"/>
    <property type="match status" value="1"/>
</dbReference>
<dbReference type="InterPro" id="IPR029028">
    <property type="entry name" value="Alpha/beta_knot_MTases"/>
</dbReference>
<dbReference type="InterPro" id="IPR023148">
    <property type="entry name" value="tRNA_m1G_MeTrfase_C_sf"/>
</dbReference>
<dbReference type="InterPro" id="IPR002649">
    <property type="entry name" value="tRNA_m1G_MeTrfase_TrmD"/>
</dbReference>
<dbReference type="InterPro" id="IPR029026">
    <property type="entry name" value="tRNA_m1G_MTases_N"/>
</dbReference>
<dbReference type="InterPro" id="IPR016009">
    <property type="entry name" value="tRNA_MeTrfase_TRMD/TRM10"/>
</dbReference>
<dbReference type="NCBIfam" id="NF000648">
    <property type="entry name" value="PRK00026.1"/>
    <property type="match status" value="1"/>
</dbReference>
<dbReference type="NCBIfam" id="TIGR00088">
    <property type="entry name" value="trmD"/>
    <property type="match status" value="1"/>
</dbReference>
<dbReference type="PANTHER" id="PTHR46417">
    <property type="entry name" value="TRNA (GUANINE-N(1)-)-METHYLTRANSFERASE"/>
    <property type="match status" value="1"/>
</dbReference>
<dbReference type="PANTHER" id="PTHR46417:SF1">
    <property type="entry name" value="TRNA (GUANINE-N(1)-)-METHYLTRANSFERASE"/>
    <property type="match status" value="1"/>
</dbReference>
<dbReference type="Pfam" id="PF01746">
    <property type="entry name" value="tRNA_m1G_MT"/>
    <property type="match status" value="1"/>
</dbReference>
<dbReference type="PIRSF" id="PIRSF000386">
    <property type="entry name" value="tRNA_mtase"/>
    <property type="match status" value="1"/>
</dbReference>
<dbReference type="SUPFAM" id="SSF75217">
    <property type="entry name" value="alpha/beta knot"/>
    <property type="match status" value="1"/>
</dbReference>
<comment type="function">
    <text evidence="1">Specifically methylates guanosine-37 in various tRNAs.</text>
</comment>
<comment type="catalytic activity">
    <reaction evidence="1">
        <text>guanosine(37) in tRNA + S-adenosyl-L-methionine = N(1)-methylguanosine(37) in tRNA + S-adenosyl-L-homocysteine + H(+)</text>
        <dbReference type="Rhea" id="RHEA:36899"/>
        <dbReference type="Rhea" id="RHEA-COMP:10145"/>
        <dbReference type="Rhea" id="RHEA-COMP:10147"/>
        <dbReference type="ChEBI" id="CHEBI:15378"/>
        <dbReference type="ChEBI" id="CHEBI:57856"/>
        <dbReference type="ChEBI" id="CHEBI:59789"/>
        <dbReference type="ChEBI" id="CHEBI:73542"/>
        <dbReference type="ChEBI" id="CHEBI:74269"/>
        <dbReference type="EC" id="2.1.1.228"/>
    </reaction>
</comment>
<comment type="subunit">
    <text evidence="1">Homodimer.</text>
</comment>
<comment type="subcellular location">
    <subcellularLocation>
        <location evidence="1">Cytoplasm</location>
    </subcellularLocation>
</comment>
<comment type="similarity">
    <text evidence="1">Belongs to the RNA methyltransferase TrmD family.</text>
</comment>
<proteinExistence type="inferred from homology"/>
<reference key="1">
    <citation type="journal article" date="2006" name="Proc. Natl. Acad. Sci. U.S.A.">
        <title>Comparative genomics of the lactic acid bacteria.</title>
        <authorList>
            <person name="Makarova K.S."/>
            <person name="Slesarev A."/>
            <person name="Wolf Y.I."/>
            <person name="Sorokin A."/>
            <person name="Mirkin B."/>
            <person name="Koonin E.V."/>
            <person name="Pavlov A."/>
            <person name="Pavlova N."/>
            <person name="Karamychev V."/>
            <person name="Polouchine N."/>
            <person name="Shakhova V."/>
            <person name="Grigoriev I."/>
            <person name="Lou Y."/>
            <person name="Rohksar D."/>
            <person name="Lucas S."/>
            <person name="Huang K."/>
            <person name="Goodstein D.M."/>
            <person name="Hawkins T."/>
            <person name="Plengvidhya V."/>
            <person name="Welker D."/>
            <person name="Hughes J."/>
            <person name="Goh Y."/>
            <person name="Benson A."/>
            <person name="Baldwin K."/>
            <person name="Lee J.-H."/>
            <person name="Diaz-Muniz I."/>
            <person name="Dosti B."/>
            <person name="Smeianov V."/>
            <person name="Wechter W."/>
            <person name="Barabote R."/>
            <person name="Lorca G."/>
            <person name="Altermann E."/>
            <person name="Barrangou R."/>
            <person name="Ganesan B."/>
            <person name="Xie Y."/>
            <person name="Rawsthorne H."/>
            <person name="Tamir D."/>
            <person name="Parker C."/>
            <person name="Breidt F."/>
            <person name="Broadbent J.R."/>
            <person name="Hutkins R."/>
            <person name="O'Sullivan D."/>
            <person name="Steele J."/>
            <person name="Unlu G."/>
            <person name="Saier M.H. Jr."/>
            <person name="Klaenhammer T."/>
            <person name="Richardson P."/>
            <person name="Kozyavkin S."/>
            <person name="Weimer B.C."/>
            <person name="Mills D.A."/>
        </authorList>
    </citation>
    <scope>NUCLEOTIDE SEQUENCE [LARGE SCALE GENOMIC DNA]</scope>
    <source>
        <strain>ATCC 334 / BCRC 17002 / CCUG 31169 / CIP 107868 / KCTC 3260 / NRRL B-441</strain>
    </source>
</reference>
<feature type="chain" id="PRO_1000006489" description="tRNA (guanine-N(1)-)-methyltransferase">
    <location>
        <begin position="1"/>
        <end position="255"/>
    </location>
</feature>
<feature type="binding site" evidence="1">
    <location>
        <position position="112"/>
    </location>
    <ligand>
        <name>S-adenosyl-L-methionine</name>
        <dbReference type="ChEBI" id="CHEBI:59789"/>
    </ligand>
</feature>
<feature type="binding site" evidence="1">
    <location>
        <begin position="131"/>
        <end position="136"/>
    </location>
    <ligand>
        <name>S-adenosyl-L-methionine</name>
        <dbReference type="ChEBI" id="CHEBI:59789"/>
    </ligand>
</feature>
<organism>
    <name type="scientific">Lacticaseibacillus paracasei (strain ATCC 334 / BCRC 17002 / CCUG 31169 / CIP 107868 / KCTC 3260 / NRRL B-441)</name>
    <name type="common">Lactobacillus paracasei</name>
    <dbReference type="NCBI Taxonomy" id="321967"/>
    <lineage>
        <taxon>Bacteria</taxon>
        <taxon>Bacillati</taxon>
        <taxon>Bacillota</taxon>
        <taxon>Bacilli</taxon>
        <taxon>Lactobacillales</taxon>
        <taxon>Lactobacillaceae</taxon>
        <taxon>Lacticaseibacillus</taxon>
    </lineage>
</organism>